<organism>
    <name type="scientific">Alcaligenes xylosoxydans xylosoxydans</name>
    <name type="common">Achromobacter xylosoxidans</name>
    <dbReference type="NCBI Taxonomy" id="85698"/>
    <lineage>
        <taxon>Bacteria</taxon>
        <taxon>Pseudomonadati</taxon>
        <taxon>Pseudomonadota</taxon>
        <taxon>Betaproteobacteria</taxon>
        <taxon>Burkholderiales</taxon>
        <taxon>Alcaligenaceae</taxon>
        <taxon>Achromobacter</taxon>
    </lineage>
</organism>
<reference key="1">
    <citation type="journal article" date="1994" name="J. Bacteriol.">
        <title>Combined nickel-cobalt-cadmium resistance encoded by the ncc locus of Alcaligenes xylosoxidans 31A.</title>
        <authorList>
            <person name="Schmidt T."/>
            <person name="Schlegel H.G."/>
        </authorList>
    </citation>
    <scope>NUCLEOTIDE SEQUENCE [GENOMIC DNA]</scope>
    <source>
        <strain>31A</strain>
    </source>
</reference>
<protein>
    <recommendedName>
        <fullName>Nickel-cobalt-cadmium resistance protein NccB</fullName>
    </recommendedName>
</protein>
<keyword id="KW-0104">Cadmium</keyword>
<keyword id="KW-0105">Cadmium resistance</keyword>
<keyword id="KW-0997">Cell inner membrane</keyword>
<keyword id="KW-1003">Cell membrane</keyword>
<keyword id="KW-0170">Cobalt</keyword>
<keyword id="KW-0175">Coiled coil</keyword>
<keyword id="KW-0472">Membrane</keyword>
<keyword id="KW-0533">Nickel</keyword>
<keyword id="KW-0614">Plasmid</keyword>
<keyword id="KW-0812">Transmembrane</keyword>
<keyword id="KW-1133">Transmembrane helix</keyword>
<keyword id="KW-0813">Transport</keyword>
<name>NCCB_ALCXX</name>
<proteinExistence type="inferred from homology"/>
<accession>Q44585</accession>
<gene>
    <name type="primary">nccB</name>
</gene>
<evidence type="ECO:0000255" key="1"/>
<evidence type="ECO:0000305" key="2"/>
<geneLocation type="plasmid">
    <name>pTOM9</name>
</geneLocation>
<feature type="chain" id="PRO_0000201888" description="Nickel-cobalt-cadmium resistance protein NccB">
    <location>
        <begin position="1"/>
        <end position="397"/>
    </location>
</feature>
<feature type="transmembrane region" description="Helical" evidence="1">
    <location>
        <begin position="10"/>
        <end position="30"/>
    </location>
</feature>
<feature type="coiled-coil region" evidence="1">
    <location>
        <begin position="137"/>
        <end position="195"/>
    </location>
</feature>
<comment type="function">
    <text>Component of the NCC cation efflux system that confers resistance to nickel, cobalt and cadmium.</text>
</comment>
<comment type="subcellular location">
    <subcellularLocation>
        <location evidence="2">Cell inner membrane</location>
        <topology evidence="2">Single-pass membrane protein</topology>
    </subcellularLocation>
</comment>
<comment type="similarity">
    <text evidence="2">Belongs to the membrane fusion protein (MFP) (TC 8.A.1) family.</text>
</comment>
<dbReference type="EMBL" id="L31363">
    <property type="protein sequence ID" value="AAA65105.1"/>
    <property type="molecule type" value="Genomic_DNA"/>
</dbReference>
<dbReference type="PIR" id="I39579">
    <property type="entry name" value="I39579"/>
</dbReference>
<dbReference type="SMR" id="Q44585"/>
<dbReference type="TCDB" id="2.A.6.1.12">
    <property type="family name" value="the resistance-nodulation-cell division (rnd) superfamily"/>
</dbReference>
<dbReference type="GO" id="GO:0030313">
    <property type="term" value="C:cell envelope"/>
    <property type="evidence" value="ECO:0007669"/>
    <property type="project" value="TreeGrafter"/>
</dbReference>
<dbReference type="GO" id="GO:0005886">
    <property type="term" value="C:plasma membrane"/>
    <property type="evidence" value="ECO:0007669"/>
    <property type="project" value="UniProtKB-SubCell"/>
</dbReference>
<dbReference type="GO" id="GO:0046873">
    <property type="term" value="F:metal ion transmembrane transporter activity"/>
    <property type="evidence" value="ECO:0007669"/>
    <property type="project" value="InterPro"/>
</dbReference>
<dbReference type="GO" id="GO:0060003">
    <property type="term" value="P:copper ion export"/>
    <property type="evidence" value="ECO:0007669"/>
    <property type="project" value="TreeGrafter"/>
</dbReference>
<dbReference type="GO" id="GO:0015679">
    <property type="term" value="P:plasma membrane copper ion transport"/>
    <property type="evidence" value="ECO:0007669"/>
    <property type="project" value="TreeGrafter"/>
</dbReference>
<dbReference type="GO" id="GO:0046686">
    <property type="term" value="P:response to cadmium ion"/>
    <property type="evidence" value="ECO:0007669"/>
    <property type="project" value="UniProtKB-KW"/>
</dbReference>
<dbReference type="FunFam" id="2.40.420.20:FF:000006">
    <property type="entry name" value="RND family efflux transporter MFP subunit"/>
    <property type="match status" value="1"/>
</dbReference>
<dbReference type="Gene3D" id="2.40.30.170">
    <property type="match status" value="1"/>
</dbReference>
<dbReference type="Gene3D" id="2.40.420.20">
    <property type="match status" value="1"/>
</dbReference>
<dbReference type="Gene3D" id="2.40.50.100">
    <property type="match status" value="1"/>
</dbReference>
<dbReference type="Gene3D" id="1.10.287.470">
    <property type="entry name" value="Helix hairpin bin"/>
    <property type="match status" value="1"/>
</dbReference>
<dbReference type="InterPro" id="IPR005695">
    <property type="entry name" value="Co/Zn/Cd_resistance_CzcB-like"/>
</dbReference>
<dbReference type="InterPro" id="IPR032317">
    <property type="entry name" value="CusB_D23"/>
</dbReference>
<dbReference type="InterPro" id="IPR051909">
    <property type="entry name" value="MFP_Cation_Efflux"/>
</dbReference>
<dbReference type="InterPro" id="IPR006143">
    <property type="entry name" value="RND_pump_MFP"/>
</dbReference>
<dbReference type="NCBIfam" id="TIGR00999">
    <property type="entry name" value="8a0102"/>
    <property type="match status" value="1"/>
</dbReference>
<dbReference type="NCBIfam" id="TIGR01730">
    <property type="entry name" value="RND_mfp"/>
    <property type="match status" value="1"/>
</dbReference>
<dbReference type="PANTHER" id="PTHR30097">
    <property type="entry name" value="CATION EFFLUX SYSTEM PROTEIN CUSB"/>
    <property type="match status" value="1"/>
</dbReference>
<dbReference type="PANTHER" id="PTHR30097:SF4">
    <property type="entry name" value="SLR6042 PROTEIN"/>
    <property type="match status" value="1"/>
</dbReference>
<dbReference type="Pfam" id="PF16576">
    <property type="entry name" value="HlyD_D23"/>
    <property type="match status" value="1"/>
</dbReference>
<dbReference type="SUPFAM" id="SSF111369">
    <property type="entry name" value="HlyD-like secretion proteins"/>
    <property type="match status" value="1"/>
</dbReference>
<sequence>MMTKNERRQPSWPMIAGVAAAAALVGFGAARGLGSPSGAEVSKLAAAPEKAAASAPAAEPAEVRIPGEYLAAANIAVEPVSAGGVGSVLLAPASVAAVPGSEAVIASRAAGAVLRIQRKLGDAVRAGDVLALVDSPEAAAMAAERKVAQARADLARKTYERESSLFQQGVTPRQEMESARIALDVAQAEVQRAATVAQAAKVSSDGRSVAVVSPIAGRITAQSVTLGAYVAPQAELFRVAGSGAVQVEAYVTAADTSRIAAGSDATIVLANGAPLAGRVQAVTPTVSGSARAATVVVTPVDANSGLIVGEGVQVRLHTKAADANAMSVPEDAVQNLDGRDVVFVRTQQGFRPKSVLVGSRSGGVAQILSGVKPGEQVATRNAFLIKAEMNKAGGDDE</sequence>